<organism>
    <name type="scientific">Bacillus anthracis</name>
    <dbReference type="NCBI Taxonomy" id="1392"/>
    <lineage>
        <taxon>Bacteria</taxon>
        <taxon>Bacillati</taxon>
        <taxon>Bacillota</taxon>
        <taxon>Bacilli</taxon>
        <taxon>Bacillales</taxon>
        <taxon>Bacillaceae</taxon>
        <taxon>Bacillus</taxon>
        <taxon>Bacillus cereus group</taxon>
    </lineage>
</organism>
<comment type="sequence caution" evidence="1">
    <conflict type="erroneous initiation">
        <sequence resource="EMBL-CDS" id="AAF13642"/>
    </conflict>
</comment>
<geneLocation type="plasmid">
    <name>pXO2</name>
</geneLocation>
<reference key="1">
    <citation type="journal article" date="1999" name="J. Appl. Microbiol.">
        <title>Sequence, assembly and analysis of pXO1 and pXO2.</title>
        <authorList>
            <person name="Okinaka R.T."/>
            <person name="Cloud K."/>
            <person name="Hampton O."/>
            <person name="Hoffmaster A."/>
            <person name="Hill K.K."/>
            <person name="Keim P."/>
            <person name="Koehler T."/>
            <person name="Lamke G."/>
            <person name="Kumano S."/>
            <person name="Manter D."/>
            <person name="Martinez Y."/>
            <person name="Ricke D."/>
            <person name="Svensson R."/>
            <person name="Jackson P.J."/>
        </authorList>
    </citation>
    <scope>NUCLEOTIDE SEQUENCE [GENOMIC DNA]</scope>
    <source>
        <strain>Pasteur</strain>
    </source>
</reference>
<reference key="2">
    <citation type="journal article" date="2002" name="Science">
        <title>Comparative genome sequencing for discovery of novel polymorphisms in Bacillus anthracis.</title>
        <authorList>
            <person name="Read T.D."/>
            <person name="Salzberg S.L."/>
            <person name="Pop M."/>
            <person name="Shumway M.F."/>
            <person name="Umayam L."/>
            <person name="Jiang L."/>
            <person name="Holtzapple E."/>
            <person name="Busch J.D."/>
            <person name="Smith K.L."/>
            <person name="Schupp J.M."/>
            <person name="Solomon D."/>
            <person name="Keim P."/>
            <person name="Fraser C.M."/>
        </authorList>
    </citation>
    <scope>NUCLEOTIDE SEQUENCE [GENOMIC DNA]</scope>
    <source>
        <strain>Ames / isolate Florida / A2012</strain>
    </source>
</reference>
<reference key="3">
    <citation type="journal article" date="2009" name="J. Bacteriol.">
        <title>The complete genome sequence of Bacillus anthracis Ames 'Ancestor'.</title>
        <authorList>
            <person name="Ravel J."/>
            <person name="Jiang L."/>
            <person name="Stanley S.T."/>
            <person name="Wilson M.R."/>
            <person name="Decker R.S."/>
            <person name="Read T.D."/>
            <person name="Worsham P."/>
            <person name="Keim P.S."/>
            <person name="Salzberg S.L."/>
            <person name="Fraser-Liggett C.M."/>
            <person name="Rasko D.A."/>
        </authorList>
    </citation>
    <scope>NUCLEOTIDE SEQUENCE [LARGE SCALE GENOMIC DNA]</scope>
    <source>
        <strain>Ames ancestor</strain>
    </source>
</reference>
<sequence>MVVLKLGKNYPIDRDSRGRYRHSYVFMRGANVEVKLLNHEELLKGKITTIEEYYCVLDVEGTSGSYQVTVNFSEVKYIKHEEFPTVEERSPKYSKGDKKTSFVFKIGEKIGCVFKDGKGIKGTLLSEDAYYLYVKSEKENYYTIMKGALSYIAHVKHEPLLLTNDFYTEEMKLADYKKPTEYVFSVGDTITVYFPSGKNVSGVVLDESKYWVLLQTEKRQITIFKGSYSYFKHETYETKAYLYVENRKLRKQLRSGDTN</sequence>
<protein>
    <recommendedName>
        <fullName>Uncharacterized protein pXO2-37/BXB0038/GBAA_pXO2_0038</fullName>
    </recommendedName>
</protein>
<gene>
    <name type="ordered locus">pXO2-37</name>
    <name type="ordered locus">BXB0038</name>
    <name type="ordered locus">GBAA_pXO2_0038</name>
</gene>
<evidence type="ECO:0000305" key="1"/>
<feature type="chain" id="PRO_0000216850" description="Uncharacterized protein pXO2-37/BXB0038/GBAA_pXO2_0038">
    <location>
        <begin position="1"/>
        <end position="259"/>
    </location>
</feature>
<keyword id="KW-0614">Plasmid</keyword>
<keyword id="KW-1185">Reference proteome</keyword>
<name>Y6538_BACAN</name>
<proteinExistence type="predicted"/>
<dbReference type="EMBL" id="AF188935">
    <property type="protein sequence ID" value="AAF13642.1"/>
    <property type="status" value="ALT_INIT"/>
    <property type="molecule type" value="Genomic_DNA"/>
</dbReference>
<dbReference type="EMBL" id="AE011191">
    <property type="protein sequence ID" value="AAM26198.1"/>
    <property type="molecule type" value="Genomic_DNA"/>
</dbReference>
<dbReference type="EMBL" id="AE017335">
    <property type="protein sequence ID" value="AAT28968.2"/>
    <property type="molecule type" value="Genomic_DNA"/>
</dbReference>
<dbReference type="RefSeq" id="NP_053192.1">
    <property type="nucleotide sequence ID" value="NC_002146.1"/>
</dbReference>
<dbReference type="KEGG" id="bar:GBAA_pXO2_0038"/>
<dbReference type="HOGENOM" id="CLU_1197826_0_0_9"/>
<dbReference type="Proteomes" id="UP000000594">
    <property type="component" value="Plasmid pXO2"/>
</dbReference>
<dbReference type="Gene3D" id="2.30.30.100">
    <property type="match status" value="1"/>
</dbReference>
<accession>Q6F047</accession>
<accession>Q8KYF2</accession>
<accession>Q9RMZ5</accession>